<name>YNZK_BACSU</name>
<evidence type="ECO:0000255" key="1"/>
<evidence type="ECO:0000305" key="2"/>
<accession>C0H417</accession>
<sequence length="118" mass="13730">MYRNIVFYLILLCLFISVVMKSFEVIRTIANVICFIFVLLYFKDEMKTYSRKALAILSICFLFLVGICAFIILQGQTLMKRHLFFTGLETIAGILLIIVSLSICTFILRKISNRLKRM</sequence>
<reference key="1">
    <citation type="journal article" date="1997" name="Nature">
        <title>The complete genome sequence of the Gram-positive bacterium Bacillus subtilis.</title>
        <authorList>
            <person name="Kunst F."/>
            <person name="Ogasawara N."/>
            <person name="Moszer I."/>
            <person name="Albertini A.M."/>
            <person name="Alloni G."/>
            <person name="Azevedo V."/>
            <person name="Bertero M.G."/>
            <person name="Bessieres P."/>
            <person name="Bolotin A."/>
            <person name="Borchert S."/>
            <person name="Borriss R."/>
            <person name="Boursier L."/>
            <person name="Brans A."/>
            <person name="Braun M."/>
            <person name="Brignell S.C."/>
            <person name="Bron S."/>
            <person name="Brouillet S."/>
            <person name="Bruschi C.V."/>
            <person name="Caldwell B."/>
            <person name="Capuano V."/>
            <person name="Carter N.M."/>
            <person name="Choi S.-K."/>
            <person name="Codani J.-J."/>
            <person name="Connerton I.F."/>
            <person name="Cummings N.J."/>
            <person name="Daniel R.A."/>
            <person name="Denizot F."/>
            <person name="Devine K.M."/>
            <person name="Duesterhoeft A."/>
            <person name="Ehrlich S.D."/>
            <person name="Emmerson P.T."/>
            <person name="Entian K.-D."/>
            <person name="Errington J."/>
            <person name="Fabret C."/>
            <person name="Ferrari E."/>
            <person name="Foulger D."/>
            <person name="Fritz C."/>
            <person name="Fujita M."/>
            <person name="Fujita Y."/>
            <person name="Fuma S."/>
            <person name="Galizzi A."/>
            <person name="Galleron N."/>
            <person name="Ghim S.-Y."/>
            <person name="Glaser P."/>
            <person name="Goffeau A."/>
            <person name="Golightly E.J."/>
            <person name="Grandi G."/>
            <person name="Guiseppi G."/>
            <person name="Guy B.J."/>
            <person name="Haga K."/>
            <person name="Haiech J."/>
            <person name="Harwood C.R."/>
            <person name="Henaut A."/>
            <person name="Hilbert H."/>
            <person name="Holsappel S."/>
            <person name="Hosono S."/>
            <person name="Hullo M.-F."/>
            <person name="Itaya M."/>
            <person name="Jones L.-M."/>
            <person name="Joris B."/>
            <person name="Karamata D."/>
            <person name="Kasahara Y."/>
            <person name="Klaerr-Blanchard M."/>
            <person name="Klein C."/>
            <person name="Kobayashi Y."/>
            <person name="Koetter P."/>
            <person name="Koningstein G."/>
            <person name="Krogh S."/>
            <person name="Kumano M."/>
            <person name="Kurita K."/>
            <person name="Lapidus A."/>
            <person name="Lardinois S."/>
            <person name="Lauber J."/>
            <person name="Lazarevic V."/>
            <person name="Lee S.-M."/>
            <person name="Levine A."/>
            <person name="Liu H."/>
            <person name="Masuda S."/>
            <person name="Mauel C."/>
            <person name="Medigue C."/>
            <person name="Medina N."/>
            <person name="Mellado R.P."/>
            <person name="Mizuno M."/>
            <person name="Moestl D."/>
            <person name="Nakai S."/>
            <person name="Noback M."/>
            <person name="Noone D."/>
            <person name="O'Reilly M."/>
            <person name="Ogawa K."/>
            <person name="Ogiwara A."/>
            <person name="Oudega B."/>
            <person name="Park S.-H."/>
            <person name="Parro V."/>
            <person name="Pohl T.M."/>
            <person name="Portetelle D."/>
            <person name="Porwollik S."/>
            <person name="Prescott A.M."/>
            <person name="Presecan E."/>
            <person name="Pujic P."/>
            <person name="Purnelle B."/>
            <person name="Rapoport G."/>
            <person name="Rey M."/>
            <person name="Reynolds S."/>
            <person name="Rieger M."/>
            <person name="Rivolta C."/>
            <person name="Rocha E."/>
            <person name="Roche B."/>
            <person name="Rose M."/>
            <person name="Sadaie Y."/>
            <person name="Sato T."/>
            <person name="Scanlan E."/>
            <person name="Schleich S."/>
            <person name="Schroeter R."/>
            <person name="Scoffone F."/>
            <person name="Sekiguchi J."/>
            <person name="Sekowska A."/>
            <person name="Seror S.J."/>
            <person name="Serror P."/>
            <person name="Shin B.-S."/>
            <person name="Soldo B."/>
            <person name="Sorokin A."/>
            <person name="Tacconi E."/>
            <person name="Takagi T."/>
            <person name="Takahashi H."/>
            <person name="Takemaru K."/>
            <person name="Takeuchi M."/>
            <person name="Tamakoshi A."/>
            <person name="Tanaka T."/>
            <person name="Terpstra P."/>
            <person name="Tognoni A."/>
            <person name="Tosato V."/>
            <person name="Uchiyama S."/>
            <person name="Vandenbol M."/>
            <person name="Vannier F."/>
            <person name="Vassarotti A."/>
            <person name="Viari A."/>
            <person name="Wambutt R."/>
            <person name="Wedler E."/>
            <person name="Wedler H."/>
            <person name="Weitzenegger T."/>
            <person name="Winters P."/>
            <person name="Wipat A."/>
            <person name="Yamamoto H."/>
            <person name="Yamane K."/>
            <person name="Yasumoto K."/>
            <person name="Yata K."/>
            <person name="Yoshida K."/>
            <person name="Yoshikawa H.-F."/>
            <person name="Zumstein E."/>
            <person name="Yoshikawa H."/>
            <person name="Danchin A."/>
        </authorList>
    </citation>
    <scope>NUCLEOTIDE SEQUENCE [LARGE SCALE GENOMIC DNA]</scope>
    <source>
        <strain>168</strain>
    </source>
</reference>
<comment type="subcellular location">
    <subcellularLocation>
        <location evidence="2">Cell membrane</location>
        <topology evidence="2">Multi-pass membrane protein</topology>
    </subcellularLocation>
</comment>
<keyword id="KW-1003">Cell membrane</keyword>
<keyword id="KW-0472">Membrane</keyword>
<keyword id="KW-1185">Reference proteome</keyword>
<keyword id="KW-0812">Transmembrane</keyword>
<keyword id="KW-1133">Transmembrane helix</keyword>
<organism>
    <name type="scientific">Bacillus subtilis (strain 168)</name>
    <dbReference type="NCBI Taxonomy" id="224308"/>
    <lineage>
        <taxon>Bacteria</taxon>
        <taxon>Bacillati</taxon>
        <taxon>Bacillota</taxon>
        <taxon>Bacilli</taxon>
        <taxon>Bacillales</taxon>
        <taxon>Bacillaceae</taxon>
        <taxon>Bacillus</taxon>
    </lineage>
</organism>
<protein>
    <recommendedName>
        <fullName>Uncharacterized membrane protein YnzK</fullName>
    </recommendedName>
</protein>
<feature type="chain" id="PRO_0000379100" description="Uncharacterized membrane protein YnzK">
    <location>
        <begin position="1"/>
        <end position="118"/>
    </location>
</feature>
<feature type="transmembrane region" description="Helical" evidence="1">
    <location>
        <begin position="5"/>
        <end position="20"/>
    </location>
</feature>
<feature type="transmembrane region" description="Helical" evidence="1">
    <location>
        <begin position="25"/>
        <end position="42"/>
    </location>
</feature>
<feature type="transmembrane region" description="Helical" evidence="1">
    <location>
        <begin position="53"/>
        <end position="73"/>
    </location>
</feature>
<feature type="transmembrane region" description="Helical" evidence="1">
    <location>
        <begin position="83"/>
        <end position="103"/>
    </location>
</feature>
<dbReference type="EMBL" id="AL009126">
    <property type="protein sequence ID" value="CAX52625.1"/>
    <property type="molecule type" value="Genomic_DNA"/>
</dbReference>
<dbReference type="RefSeq" id="WP_003245181.1">
    <property type="nucleotide sequence ID" value="NZ_OZ025638.1"/>
</dbReference>
<dbReference type="RefSeq" id="YP_003097731.1">
    <property type="nucleotide sequence ID" value="NC_000964.3"/>
</dbReference>
<dbReference type="SMR" id="C0H417"/>
<dbReference type="FunCoup" id="C0H417">
    <property type="interactions" value="2"/>
</dbReference>
<dbReference type="STRING" id="224308.BSU17699"/>
<dbReference type="PaxDb" id="224308-BSU17699"/>
<dbReference type="EnsemblBacteria" id="CAX52625">
    <property type="protein sequence ID" value="CAX52625"/>
    <property type="gene ID" value="BSU_17699"/>
</dbReference>
<dbReference type="GeneID" id="8303021"/>
<dbReference type="KEGG" id="bsu:BSU17699"/>
<dbReference type="PATRIC" id="fig|224308.179.peg.1925"/>
<dbReference type="InParanoid" id="C0H417"/>
<dbReference type="OrthoDB" id="2916393at2"/>
<dbReference type="BioCyc" id="BSUB:BSU17699-MONOMER"/>
<dbReference type="Proteomes" id="UP000001570">
    <property type="component" value="Chromosome"/>
</dbReference>
<dbReference type="GO" id="GO:0005886">
    <property type="term" value="C:plasma membrane"/>
    <property type="evidence" value="ECO:0007669"/>
    <property type="project" value="UniProtKB-SubCell"/>
</dbReference>
<dbReference type="InterPro" id="IPR025621">
    <property type="entry name" value="YoqO"/>
</dbReference>
<dbReference type="Pfam" id="PF14037">
    <property type="entry name" value="YoqO"/>
    <property type="match status" value="1"/>
</dbReference>
<proteinExistence type="predicted"/>
<gene>
    <name type="primary">ynzK</name>
    <name type="ordered locus">BSU17699</name>
</gene>